<comment type="subunit">
    <text evidence="1">Part of the 50S ribosomal subunit. Contacts protein L32.</text>
</comment>
<comment type="similarity">
    <text evidence="1">Belongs to the bacterial ribosomal protein bL17 family.</text>
</comment>
<dbReference type="EMBL" id="AE000783">
    <property type="protein sequence ID" value="AAC66839.1"/>
    <property type="molecule type" value="Genomic_DNA"/>
</dbReference>
<dbReference type="PIR" id="F70162">
    <property type="entry name" value="F70162"/>
</dbReference>
<dbReference type="RefSeq" id="NP_212637.1">
    <property type="nucleotide sequence ID" value="NC_001318.1"/>
</dbReference>
<dbReference type="RefSeq" id="WP_002658786.1">
    <property type="nucleotide sequence ID" value="NC_001318.1"/>
</dbReference>
<dbReference type="PDB" id="8FMW">
    <property type="method" value="EM"/>
    <property type="resolution" value="2.86 A"/>
    <property type="chains" value="AP=1-121"/>
</dbReference>
<dbReference type="PDB" id="8FN2">
    <property type="method" value="EM"/>
    <property type="resolution" value="3.40 A"/>
    <property type="chains" value="P=1-121"/>
</dbReference>
<dbReference type="PDBsum" id="8FMW"/>
<dbReference type="PDBsum" id="8FN2"/>
<dbReference type="EMDB" id="EMD-29298"/>
<dbReference type="EMDB" id="EMD-29304"/>
<dbReference type="SMR" id="O51456"/>
<dbReference type="STRING" id="224326.BB_0503"/>
<dbReference type="PaxDb" id="224326-BB_0503"/>
<dbReference type="EnsemblBacteria" id="AAC66839">
    <property type="protein sequence ID" value="AAC66839"/>
    <property type="gene ID" value="BB_0503"/>
</dbReference>
<dbReference type="KEGG" id="bbu:BB_0503"/>
<dbReference type="PATRIC" id="fig|224326.49.peg.894"/>
<dbReference type="HOGENOM" id="CLU_074407_2_0_12"/>
<dbReference type="OrthoDB" id="9809073at2"/>
<dbReference type="Proteomes" id="UP000001807">
    <property type="component" value="Chromosome"/>
</dbReference>
<dbReference type="GO" id="GO:0005829">
    <property type="term" value="C:cytosol"/>
    <property type="evidence" value="ECO:0000314"/>
    <property type="project" value="CAFA"/>
</dbReference>
<dbReference type="GO" id="GO:0022625">
    <property type="term" value="C:cytosolic large ribosomal subunit"/>
    <property type="evidence" value="ECO:0007669"/>
    <property type="project" value="TreeGrafter"/>
</dbReference>
<dbReference type="GO" id="GO:0003735">
    <property type="term" value="F:structural constituent of ribosome"/>
    <property type="evidence" value="ECO:0007669"/>
    <property type="project" value="InterPro"/>
</dbReference>
<dbReference type="GO" id="GO:0006412">
    <property type="term" value="P:translation"/>
    <property type="evidence" value="ECO:0007669"/>
    <property type="project" value="UniProtKB-UniRule"/>
</dbReference>
<dbReference type="FunFam" id="3.90.1030.10:FF:000018">
    <property type="entry name" value="50S ribosomal protein L17"/>
    <property type="match status" value="1"/>
</dbReference>
<dbReference type="Gene3D" id="3.90.1030.10">
    <property type="entry name" value="Ribosomal protein L17"/>
    <property type="match status" value="1"/>
</dbReference>
<dbReference type="HAMAP" id="MF_01368">
    <property type="entry name" value="Ribosomal_bL17"/>
    <property type="match status" value="1"/>
</dbReference>
<dbReference type="InterPro" id="IPR000456">
    <property type="entry name" value="Ribosomal_bL17"/>
</dbReference>
<dbReference type="InterPro" id="IPR047859">
    <property type="entry name" value="Ribosomal_bL17_CS"/>
</dbReference>
<dbReference type="InterPro" id="IPR036373">
    <property type="entry name" value="Ribosomal_bL17_sf"/>
</dbReference>
<dbReference type="NCBIfam" id="TIGR00059">
    <property type="entry name" value="L17"/>
    <property type="match status" value="1"/>
</dbReference>
<dbReference type="PANTHER" id="PTHR14413:SF16">
    <property type="entry name" value="LARGE RIBOSOMAL SUBUNIT PROTEIN BL17M"/>
    <property type="match status" value="1"/>
</dbReference>
<dbReference type="PANTHER" id="PTHR14413">
    <property type="entry name" value="RIBOSOMAL PROTEIN L17"/>
    <property type="match status" value="1"/>
</dbReference>
<dbReference type="Pfam" id="PF01196">
    <property type="entry name" value="Ribosomal_L17"/>
    <property type="match status" value="1"/>
</dbReference>
<dbReference type="SUPFAM" id="SSF64263">
    <property type="entry name" value="Prokaryotic ribosomal protein L17"/>
    <property type="match status" value="1"/>
</dbReference>
<dbReference type="PROSITE" id="PS01167">
    <property type="entry name" value="RIBOSOMAL_L17"/>
    <property type="match status" value="1"/>
</dbReference>
<gene>
    <name evidence="1" type="primary">rplQ</name>
    <name type="ordered locus">BB_0503</name>
</gene>
<name>RL17_BORBU</name>
<reference key="1">
    <citation type="journal article" date="1997" name="Nature">
        <title>Genomic sequence of a Lyme disease spirochaete, Borrelia burgdorferi.</title>
        <authorList>
            <person name="Fraser C.M."/>
            <person name="Casjens S."/>
            <person name="Huang W.M."/>
            <person name="Sutton G.G."/>
            <person name="Clayton R.A."/>
            <person name="Lathigra R."/>
            <person name="White O."/>
            <person name="Ketchum K.A."/>
            <person name="Dodson R.J."/>
            <person name="Hickey E.K."/>
            <person name="Gwinn M.L."/>
            <person name="Dougherty B.A."/>
            <person name="Tomb J.-F."/>
            <person name="Fleischmann R.D."/>
            <person name="Richardson D.L."/>
            <person name="Peterson J.D."/>
            <person name="Kerlavage A.R."/>
            <person name="Quackenbush J."/>
            <person name="Salzberg S.L."/>
            <person name="Hanson M."/>
            <person name="van Vugt R."/>
            <person name="Palmer N."/>
            <person name="Adams M.D."/>
            <person name="Gocayne J.D."/>
            <person name="Weidman J.F."/>
            <person name="Utterback T.R."/>
            <person name="Watthey L."/>
            <person name="McDonald L.A."/>
            <person name="Artiach P."/>
            <person name="Bowman C."/>
            <person name="Garland S.A."/>
            <person name="Fujii C."/>
            <person name="Cotton M.D."/>
            <person name="Horst K."/>
            <person name="Roberts K.M."/>
            <person name="Hatch B."/>
            <person name="Smith H.O."/>
            <person name="Venter J.C."/>
        </authorList>
    </citation>
    <scope>NUCLEOTIDE SEQUENCE [LARGE SCALE GENOMIC DNA]</scope>
    <source>
        <strain>ATCC 35210 / DSM 4680 / CIP 102532 / B31</strain>
    </source>
</reference>
<proteinExistence type="evidence at protein level"/>
<keyword id="KW-0002">3D-structure</keyword>
<keyword id="KW-1185">Reference proteome</keyword>
<keyword id="KW-0687">Ribonucleoprotein</keyword>
<keyword id="KW-0689">Ribosomal protein</keyword>
<feature type="chain" id="PRO_0000175516" description="Large ribosomal subunit protein bL17">
    <location>
        <begin position="1"/>
        <end position="123"/>
    </location>
</feature>
<feature type="helix" evidence="3">
    <location>
        <begin position="9"/>
        <end position="11"/>
    </location>
</feature>
<feature type="helix" evidence="3">
    <location>
        <begin position="14"/>
        <end position="31"/>
    </location>
</feature>
<feature type="strand" evidence="3">
    <location>
        <begin position="32"/>
        <end position="37"/>
    </location>
</feature>
<feature type="helix" evidence="3">
    <location>
        <begin position="38"/>
        <end position="54"/>
    </location>
</feature>
<feature type="helix" evidence="3">
    <location>
        <begin position="60"/>
        <end position="67"/>
    </location>
</feature>
<feature type="helix" evidence="3">
    <location>
        <begin position="73"/>
        <end position="81"/>
    </location>
</feature>
<feature type="helix" evidence="3">
    <location>
        <begin position="84"/>
        <end position="86"/>
    </location>
</feature>
<feature type="strand" evidence="3">
    <location>
        <begin position="87"/>
        <end position="89"/>
    </location>
</feature>
<feature type="strand" evidence="3">
    <location>
        <begin position="95"/>
        <end position="102"/>
    </location>
</feature>
<feature type="turn" evidence="3">
    <location>
        <begin position="104"/>
        <end position="106"/>
    </location>
</feature>
<feature type="strand" evidence="3">
    <location>
        <begin position="109"/>
        <end position="117"/>
    </location>
</feature>
<protein>
    <recommendedName>
        <fullName evidence="1">Large ribosomal subunit protein bL17</fullName>
    </recommendedName>
    <alternativeName>
        <fullName evidence="2">50S ribosomal protein L17</fullName>
    </alternativeName>
</protein>
<organism>
    <name type="scientific">Borreliella burgdorferi (strain ATCC 35210 / DSM 4680 / CIP 102532 / B31)</name>
    <name type="common">Borrelia burgdorferi</name>
    <dbReference type="NCBI Taxonomy" id="224326"/>
    <lineage>
        <taxon>Bacteria</taxon>
        <taxon>Pseudomonadati</taxon>
        <taxon>Spirochaetota</taxon>
        <taxon>Spirochaetia</taxon>
        <taxon>Spirochaetales</taxon>
        <taxon>Borreliaceae</taxon>
        <taxon>Borreliella</taxon>
    </lineage>
</organism>
<evidence type="ECO:0000255" key="1">
    <source>
        <dbReference type="HAMAP-Rule" id="MF_01368"/>
    </source>
</evidence>
<evidence type="ECO:0000305" key="2"/>
<evidence type="ECO:0007829" key="3">
    <source>
        <dbReference type="PDB" id="8FN2"/>
    </source>
</evidence>
<sequence length="123" mass="14500">MKTKLGFNRLSRKSSHRRALLKNMVISFFKHEKISSTKTKLFEVKRFAERLITRAKVDTVHNRRELSKFIHDKHILNKLFTKISPVFRQRSGGYTRMIKLGKRYGDAAEMAILELVEKPLKVE</sequence>
<accession>O51456</accession>